<proteinExistence type="evidence at transcript level"/>
<keyword id="KW-0472">Membrane</keyword>
<keyword id="KW-1185">Reference proteome</keyword>
<keyword id="KW-0812">Transmembrane</keyword>
<keyword id="KW-1133">Transmembrane helix</keyword>
<evidence type="ECO:0000255" key="1"/>
<evidence type="ECO:0000269" key="2">
    <source>
    </source>
</evidence>
<evidence type="ECO:0000303" key="3">
    <source>
    </source>
</evidence>
<evidence type="ECO:0000305" key="4">
    <source>
    </source>
</evidence>
<evidence type="ECO:0000305" key="5">
    <source>
    </source>
</evidence>
<accession>S8B3I8</accession>
<name>POXN_PENO1</name>
<sequence>MALDLLVVSAGSLALKVLRVTPLITTTILLVNRLAQYFALSTFLPPHTSPKKIDHVGAAFQHWLQTVVPRVWTGVISIVLFTRVALILNLFVRPDDLAGSNARFLYGVGLFLSFAHLSVAPKMLKFEKRMMSPETVPHVAMELLAGWMKVNNIRFWIVDVPFWVVGVWATLEGLKA</sequence>
<comment type="function">
    <text evidence="2 5">Part of the gene cluster that mediates the biosynthesis of oxaleimides, cytotoxic compounds containing an unusual disubstituted succinimide moiety (PubMed:28365998). The first step of the pathway is provided by the HR-PKS poxF that serves in a new mode of collaborative biosynthesis with the PKS-NRPS poxE, by providing the olefin containing amino acid substrate via the synthesis of an ACP-bound dec-4-enoate (PubMed:28365998). The cytochrome P450 monooxygenase poxM-catalyzed oxidation at the alpha-position creates the enzyme-bound 2-hydroxydec-4-enoyl-ACP thioester, which may be prone to spontaneous hydrolysis to yield 2-hydroxydec-4-enoic acid due to increased electrophilicity of the carbonyl (PubMed:28365998). 2-hydroxydec-4-enoic acid can then be further oxidized by poxM to yield the alpha-ketoacid 2-oxodec-4-enoicacid, which is reductively aminated by the aminotransferase poxL to yield (S,E)-2-aminodec-4-enoic acid (PubMed:28365998). The Hybrid PKS-NRPS synthetase poxE then performs condensation between the octaketide product of its PKS modules and the amino group of (S,E)-2-aminodec-4-enoic acid which is activated and incorporated by the adenylation domain (PubMed:28365998). The resulting aminoacyl product can be cyclized by the Diels-Alderase PoxQ and reductively released by the reductive (R) domain of poxE to yield an aldehyde intermediate (Probable) (PubMed:28365998). The released aldehyde is then substrate for a Knoevenagel condensation by the hydrolyase poxO followed by an oxidation at the 5-position of the pyrrolidone ring (PubMed:28365998). The presence of the olefin from the amino acid building block allows for migration of the substituted allyl group to occur (PubMed:28365998). This allylic transposition reaction takes place in a conjugate addition, semipinacol-like fashion to yield a succinimide intermediate (PubMed:28365998). Iterative two-electron oxidations of the C7 methyl of the succinimide intermediate to the carboxylic acid can be catalyzed by one of two remaining cytochrome P450 monooxygenasess poxC or poxD to yield oxaleimide A (PubMed:28365998). Subsequent oxidation yields the maleimide scaffold oxaleimide I (PubMed:28365998). Both oxaleimide A and oxaleimide I can undergo oxidative modifications in the decalin ring to yield the series of products oxaleimides B to H (PubMed:28365998).</text>
</comment>
<comment type="pathway">
    <text evidence="4">Secondary metabolite biosynthesis.</text>
</comment>
<comment type="subcellular location">
    <subcellularLocation>
        <location evidence="1">Membrane</location>
        <topology evidence="1">Multi-pass membrane protein</topology>
    </subcellularLocation>
</comment>
<comment type="induction">
    <text evidence="2">Expression is positively regulated by the oxaleimides biosynthesis cluster-specific transcription factor poxB.</text>
</comment>
<feature type="chain" id="PRO_0000453780" description="Oxaleimides biosynthesis cluster protein N">
    <location>
        <begin position="1"/>
        <end position="176"/>
    </location>
</feature>
<feature type="transmembrane region" description="Helical" evidence="1">
    <location>
        <begin position="5"/>
        <end position="25"/>
    </location>
</feature>
<feature type="transmembrane region" description="Helical" evidence="1">
    <location>
        <begin position="71"/>
        <end position="91"/>
    </location>
</feature>
<feature type="transmembrane region" description="Helical" evidence="1">
    <location>
        <begin position="104"/>
        <end position="124"/>
    </location>
</feature>
<feature type="transmembrane region" description="Helical" evidence="1">
    <location>
        <begin position="155"/>
        <end position="175"/>
    </location>
</feature>
<protein>
    <recommendedName>
        <fullName evidence="3">Oxaleimides biosynthesis cluster protein N</fullName>
    </recommendedName>
</protein>
<reference key="1">
    <citation type="journal article" date="2013" name="PLoS ONE">
        <title>Genomic and secretomic analyses reveal unique features of the lignocellulolytic enzyme system of Penicillium decumbens.</title>
        <authorList>
            <person name="Liu G."/>
            <person name="Zhang L."/>
            <person name="Wei X."/>
            <person name="Zou G."/>
            <person name="Qin Y."/>
            <person name="Ma L."/>
            <person name="Li J."/>
            <person name="Zheng H."/>
            <person name="Wang S."/>
            <person name="Wang C."/>
            <person name="Xun L."/>
            <person name="Zhao G.-P."/>
            <person name="Zhou Z."/>
            <person name="Qu Y."/>
        </authorList>
    </citation>
    <scope>NUCLEOTIDE SEQUENCE [LARGE SCALE GENOMIC DNA]</scope>
    <source>
        <strain>114-2 / CGMCC 5302</strain>
    </source>
</reference>
<reference key="2">
    <citation type="journal article" date="2017" name="J. Am. Chem. Soc.">
        <title>Collaborative Biosynthesis of Maleimide- and Succinimide-Containing Natural Products by Fungal Polyketide Megasynthases.</title>
        <authorList>
            <person name="Sato M."/>
            <person name="Dander J.E."/>
            <person name="Sato C."/>
            <person name="Hung Y.S."/>
            <person name="Gao S.S."/>
            <person name="Tang M.C."/>
            <person name="Hang L."/>
            <person name="Winter J.M."/>
            <person name="Garg N.K."/>
            <person name="Watanabe K."/>
            <person name="Tang Y."/>
        </authorList>
    </citation>
    <scope>FUNCTION</scope>
    <scope>INDUCTION</scope>
    <scope>PATHWAY</scope>
</reference>
<reference key="3">
    <citation type="journal article" date="2020" name="Chem. Commun. (Camb.)">
        <title>Evidence for enzyme catalysed intramolecular [4+2] Diels-Alder cyclization during the biosynthesis of pyrichalasin H.</title>
        <authorList>
            <person name="Hantke V."/>
            <person name="Skellam E.J."/>
            <person name="Cox R.J."/>
        </authorList>
    </citation>
    <scope>FUNCTION</scope>
</reference>
<dbReference type="EMBL" id="KB644411">
    <property type="protein sequence ID" value="EPS29077.1"/>
    <property type="molecule type" value="Genomic_DNA"/>
</dbReference>
<dbReference type="HOGENOM" id="CLU_1525690_0_0_1"/>
<dbReference type="OrthoDB" id="1523883at2759"/>
<dbReference type="PhylomeDB" id="S8B3I8"/>
<dbReference type="Proteomes" id="UP000019376">
    <property type="component" value="Unassembled WGS sequence"/>
</dbReference>
<dbReference type="GO" id="GO:0016020">
    <property type="term" value="C:membrane"/>
    <property type="evidence" value="ECO:0007669"/>
    <property type="project" value="UniProtKB-SubCell"/>
</dbReference>
<gene>
    <name evidence="3" type="primary">poxN</name>
    <name type="ORF">PDE_04026</name>
</gene>
<organism>
    <name type="scientific">Penicillium oxalicum (strain 114-2 / CGMCC 5302)</name>
    <name type="common">Penicillium decumbens</name>
    <dbReference type="NCBI Taxonomy" id="933388"/>
    <lineage>
        <taxon>Eukaryota</taxon>
        <taxon>Fungi</taxon>
        <taxon>Dikarya</taxon>
        <taxon>Ascomycota</taxon>
        <taxon>Pezizomycotina</taxon>
        <taxon>Eurotiomycetes</taxon>
        <taxon>Eurotiomycetidae</taxon>
        <taxon>Eurotiales</taxon>
        <taxon>Aspergillaceae</taxon>
        <taxon>Penicillium</taxon>
    </lineage>
</organism>